<accession>Q8FBE0</accession>
<dbReference type="EC" id="5.3.1.14" evidence="1"/>
<dbReference type="EMBL" id="AE014075">
    <property type="protein sequence ID" value="AAN83280.1"/>
    <property type="status" value="ALT_INIT"/>
    <property type="molecule type" value="Genomic_DNA"/>
</dbReference>
<dbReference type="RefSeq" id="WP_024182256.1">
    <property type="nucleotide sequence ID" value="NC_004431.1"/>
</dbReference>
<dbReference type="SMR" id="Q8FBE0"/>
<dbReference type="STRING" id="199310.c4852"/>
<dbReference type="KEGG" id="ecc:c4852"/>
<dbReference type="eggNOG" id="COG4806">
    <property type="taxonomic scope" value="Bacteria"/>
</dbReference>
<dbReference type="HOGENOM" id="CLU_052790_0_0_6"/>
<dbReference type="UniPathway" id="UPA00541">
    <property type="reaction ID" value="UER00601"/>
</dbReference>
<dbReference type="Proteomes" id="UP000001410">
    <property type="component" value="Chromosome"/>
</dbReference>
<dbReference type="GO" id="GO:0005737">
    <property type="term" value="C:cytoplasm"/>
    <property type="evidence" value="ECO:0007669"/>
    <property type="project" value="UniProtKB-SubCell"/>
</dbReference>
<dbReference type="GO" id="GO:0008740">
    <property type="term" value="F:L-rhamnose isomerase activity"/>
    <property type="evidence" value="ECO:0007669"/>
    <property type="project" value="UniProtKB-UniRule"/>
</dbReference>
<dbReference type="GO" id="GO:0030145">
    <property type="term" value="F:manganese ion binding"/>
    <property type="evidence" value="ECO:0007669"/>
    <property type="project" value="UniProtKB-UniRule"/>
</dbReference>
<dbReference type="GO" id="GO:0019324">
    <property type="term" value="P:L-lyxose metabolic process"/>
    <property type="evidence" value="ECO:0007669"/>
    <property type="project" value="TreeGrafter"/>
</dbReference>
<dbReference type="GO" id="GO:0019301">
    <property type="term" value="P:rhamnose catabolic process"/>
    <property type="evidence" value="ECO:0007669"/>
    <property type="project" value="UniProtKB-UniRule"/>
</dbReference>
<dbReference type="FunFam" id="3.20.20.150:FF:000006">
    <property type="entry name" value="L-rhamnose isomerase"/>
    <property type="match status" value="1"/>
</dbReference>
<dbReference type="Gene3D" id="3.20.20.150">
    <property type="entry name" value="Divalent-metal-dependent TIM barrel enzymes"/>
    <property type="match status" value="1"/>
</dbReference>
<dbReference type="HAMAP" id="MF_00541">
    <property type="entry name" value="RhaA"/>
    <property type="match status" value="1"/>
</dbReference>
<dbReference type="InterPro" id="IPR050337">
    <property type="entry name" value="L-rhamnose_isomerase"/>
</dbReference>
<dbReference type="InterPro" id="IPR009308">
    <property type="entry name" value="Rhamnose_isomerase"/>
</dbReference>
<dbReference type="InterPro" id="IPR036237">
    <property type="entry name" value="Xyl_isomerase-like_sf"/>
</dbReference>
<dbReference type="NCBIfam" id="NF002203">
    <property type="entry name" value="PRK01076.1"/>
    <property type="match status" value="1"/>
</dbReference>
<dbReference type="NCBIfam" id="TIGR01748">
    <property type="entry name" value="rhaA"/>
    <property type="match status" value="1"/>
</dbReference>
<dbReference type="PANTHER" id="PTHR30268">
    <property type="entry name" value="L-RHAMNOSE ISOMERASE"/>
    <property type="match status" value="1"/>
</dbReference>
<dbReference type="PANTHER" id="PTHR30268:SF0">
    <property type="entry name" value="L-RHAMNOSE ISOMERASE"/>
    <property type="match status" value="1"/>
</dbReference>
<dbReference type="Pfam" id="PF06134">
    <property type="entry name" value="RhaA"/>
    <property type="match status" value="1"/>
</dbReference>
<dbReference type="SUPFAM" id="SSF51658">
    <property type="entry name" value="Xylose isomerase-like"/>
    <property type="match status" value="1"/>
</dbReference>
<sequence length="419" mass="47241">MTTQLEQAWELAKQRFAAVGIDVEEALRQLDRLPVSMHCWQGDDVSGFENPEGSLTGGIQATGNYPGKARNASELRADLEQAMRLIPGPKRLNLHAIYLESDTPVARDQIKPEHFKNWVEWAKTNQLGLDFNPSCFSHPLSADGFTLSHADDSIRQFWIDHCKASRRVSAYFGEQLGTPSVMNIWIPDGMKDITVDRLAPRQRLLAALDEVISEKLDPAHHIDAVESKLFGIGAESYTVGSNEFYMGYATSRQTALCLDAGHFHPTEVISDKISAAMLYVPQLLLHVSRPVRWDSDHVVLLDDETQAIASEIVRHDLFDRVHIGLDFFDASINRIAAWVIGTRNMKKALLRALLEPTAELRKLEAAGDYTARLALLEEQKSLPWQAVWKMYCQRHDTPAGSEWLENVRAYEKEILSRRG</sequence>
<comment type="function">
    <text evidence="1">Catalyzes the interconversion of L-rhamnose and L-rhamnulose.</text>
</comment>
<comment type="catalytic activity">
    <reaction evidence="1">
        <text>L-rhamnopyranose = L-rhamnulose</text>
        <dbReference type="Rhea" id="RHEA:23160"/>
        <dbReference type="ChEBI" id="CHEBI:17897"/>
        <dbReference type="ChEBI" id="CHEBI:62346"/>
        <dbReference type="EC" id="5.3.1.14"/>
    </reaction>
</comment>
<comment type="cofactor">
    <cofactor evidence="1">
        <name>Mn(2+)</name>
        <dbReference type="ChEBI" id="CHEBI:29035"/>
    </cofactor>
    <text evidence="1">Binds 1 Mn(2+) ion per subunit.</text>
</comment>
<comment type="pathway">
    <text evidence="1">Carbohydrate degradation; L-rhamnose degradation; glycerone phosphate from L-rhamnose: step 1/3.</text>
</comment>
<comment type="subunit">
    <text evidence="1">Homotetramer.</text>
</comment>
<comment type="subcellular location">
    <subcellularLocation>
        <location evidence="1">Cytoplasm</location>
    </subcellularLocation>
</comment>
<comment type="similarity">
    <text evidence="1">Belongs to the rhamnose isomerase family.</text>
</comment>
<comment type="sequence caution" evidence="2">
    <conflict type="erroneous initiation">
        <sequence resource="EMBL-CDS" id="AAN83280"/>
    </conflict>
</comment>
<gene>
    <name evidence="1" type="primary">rhaA</name>
    <name type="ordered locus">c4852</name>
</gene>
<organism>
    <name type="scientific">Escherichia coli O6:H1 (strain CFT073 / ATCC 700928 / UPEC)</name>
    <dbReference type="NCBI Taxonomy" id="199310"/>
    <lineage>
        <taxon>Bacteria</taxon>
        <taxon>Pseudomonadati</taxon>
        <taxon>Pseudomonadota</taxon>
        <taxon>Gammaproteobacteria</taxon>
        <taxon>Enterobacterales</taxon>
        <taxon>Enterobacteriaceae</taxon>
        <taxon>Escherichia</taxon>
    </lineage>
</organism>
<protein>
    <recommendedName>
        <fullName evidence="1">L-rhamnose isomerase</fullName>
        <ecNumber evidence="1">5.3.1.14</ecNumber>
    </recommendedName>
</protein>
<name>RHAA_ECOL6</name>
<keyword id="KW-0963">Cytoplasm</keyword>
<keyword id="KW-0413">Isomerase</keyword>
<keyword id="KW-0464">Manganese</keyword>
<keyword id="KW-0479">Metal-binding</keyword>
<keyword id="KW-1185">Reference proteome</keyword>
<keyword id="KW-0684">Rhamnose metabolism</keyword>
<proteinExistence type="inferred from homology"/>
<evidence type="ECO:0000255" key="1">
    <source>
        <dbReference type="HAMAP-Rule" id="MF_00541"/>
    </source>
</evidence>
<evidence type="ECO:0000305" key="2"/>
<reference key="1">
    <citation type="journal article" date="2002" name="Proc. Natl. Acad. Sci. U.S.A.">
        <title>Extensive mosaic structure revealed by the complete genome sequence of uropathogenic Escherichia coli.</title>
        <authorList>
            <person name="Welch R.A."/>
            <person name="Burland V."/>
            <person name="Plunkett G. III"/>
            <person name="Redford P."/>
            <person name="Roesch P."/>
            <person name="Rasko D."/>
            <person name="Buckles E.L."/>
            <person name="Liou S.-R."/>
            <person name="Boutin A."/>
            <person name="Hackett J."/>
            <person name="Stroud D."/>
            <person name="Mayhew G.F."/>
            <person name="Rose D.J."/>
            <person name="Zhou S."/>
            <person name="Schwartz D.C."/>
            <person name="Perna N.T."/>
            <person name="Mobley H.L.T."/>
            <person name="Donnenberg M.S."/>
            <person name="Blattner F.R."/>
        </authorList>
    </citation>
    <scope>NUCLEOTIDE SEQUENCE [LARGE SCALE GENOMIC DNA]</scope>
    <source>
        <strain>CFT073 / ATCC 700928 / UPEC</strain>
    </source>
</reference>
<feature type="chain" id="PRO_0000090553" description="L-rhamnose isomerase">
    <location>
        <begin position="1"/>
        <end position="419"/>
    </location>
</feature>
<feature type="binding site" evidence="1">
    <location>
        <position position="262"/>
    </location>
    <ligand>
        <name>Mn(2+)</name>
        <dbReference type="ChEBI" id="CHEBI:29035"/>
    </ligand>
</feature>
<feature type="binding site" evidence="1">
    <location>
        <position position="294"/>
    </location>
    <ligand>
        <name>Mn(2+)</name>
        <dbReference type="ChEBI" id="CHEBI:29035"/>
    </ligand>
</feature>
<feature type="binding site" evidence="1">
    <location>
        <position position="296"/>
    </location>
    <ligand>
        <name>Mn(2+)</name>
        <dbReference type="ChEBI" id="CHEBI:29035"/>
    </ligand>
</feature>